<organism>
    <name type="scientific">Brevibacillus brevis (strain 47 / JCM 6285 / NBRC 100599)</name>
    <dbReference type="NCBI Taxonomy" id="358681"/>
    <lineage>
        <taxon>Bacteria</taxon>
        <taxon>Bacillati</taxon>
        <taxon>Bacillota</taxon>
        <taxon>Bacilli</taxon>
        <taxon>Bacillales</taxon>
        <taxon>Paenibacillaceae</taxon>
        <taxon>Brevibacillus</taxon>
    </lineage>
</organism>
<feature type="chain" id="PRO_1000134428" description="Large ribosomal subunit protein bL34">
    <location>
        <begin position="1"/>
        <end position="44"/>
    </location>
</feature>
<feature type="region of interest" description="Disordered" evidence="2">
    <location>
        <begin position="1"/>
        <end position="44"/>
    </location>
</feature>
<feature type="compositionally biased region" description="Basic residues" evidence="2">
    <location>
        <begin position="9"/>
        <end position="44"/>
    </location>
</feature>
<accession>C0ZA72</accession>
<dbReference type="EMBL" id="AP008955">
    <property type="protein sequence ID" value="BAH46926.1"/>
    <property type="molecule type" value="Genomic_DNA"/>
</dbReference>
<dbReference type="RefSeq" id="WP_007720125.1">
    <property type="nucleotide sequence ID" value="NC_012491.1"/>
</dbReference>
<dbReference type="SMR" id="C0ZA72"/>
<dbReference type="STRING" id="358681.BBR47_59490"/>
<dbReference type="GeneID" id="95752656"/>
<dbReference type="KEGG" id="bbe:BBR47_59490"/>
<dbReference type="eggNOG" id="COG0230">
    <property type="taxonomic scope" value="Bacteria"/>
</dbReference>
<dbReference type="HOGENOM" id="CLU_129938_2_0_9"/>
<dbReference type="Proteomes" id="UP000001877">
    <property type="component" value="Chromosome"/>
</dbReference>
<dbReference type="GO" id="GO:1990904">
    <property type="term" value="C:ribonucleoprotein complex"/>
    <property type="evidence" value="ECO:0007669"/>
    <property type="project" value="UniProtKB-KW"/>
</dbReference>
<dbReference type="GO" id="GO:0005840">
    <property type="term" value="C:ribosome"/>
    <property type="evidence" value="ECO:0007669"/>
    <property type="project" value="UniProtKB-KW"/>
</dbReference>
<dbReference type="GO" id="GO:0003735">
    <property type="term" value="F:structural constituent of ribosome"/>
    <property type="evidence" value="ECO:0007669"/>
    <property type="project" value="InterPro"/>
</dbReference>
<dbReference type="GO" id="GO:0006412">
    <property type="term" value="P:translation"/>
    <property type="evidence" value="ECO:0007669"/>
    <property type="project" value="UniProtKB-UniRule"/>
</dbReference>
<dbReference type="FunFam" id="1.10.287.3980:FF:000001">
    <property type="entry name" value="Mitochondrial ribosomal protein L34"/>
    <property type="match status" value="1"/>
</dbReference>
<dbReference type="Gene3D" id="1.10.287.3980">
    <property type="match status" value="1"/>
</dbReference>
<dbReference type="HAMAP" id="MF_00391">
    <property type="entry name" value="Ribosomal_bL34"/>
    <property type="match status" value="1"/>
</dbReference>
<dbReference type="InterPro" id="IPR000271">
    <property type="entry name" value="Ribosomal_bL34"/>
</dbReference>
<dbReference type="NCBIfam" id="TIGR01030">
    <property type="entry name" value="rpmH_bact"/>
    <property type="match status" value="1"/>
</dbReference>
<dbReference type="PANTHER" id="PTHR14503:SF4">
    <property type="entry name" value="LARGE RIBOSOMAL SUBUNIT PROTEIN BL34M"/>
    <property type="match status" value="1"/>
</dbReference>
<dbReference type="PANTHER" id="PTHR14503">
    <property type="entry name" value="MITOCHONDRIAL RIBOSOMAL PROTEIN 34 FAMILY MEMBER"/>
    <property type="match status" value="1"/>
</dbReference>
<dbReference type="Pfam" id="PF00468">
    <property type="entry name" value="Ribosomal_L34"/>
    <property type="match status" value="1"/>
</dbReference>
<keyword id="KW-1185">Reference proteome</keyword>
<keyword id="KW-0687">Ribonucleoprotein</keyword>
<keyword id="KW-0689">Ribosomal protein</keyword>
<proteinExistence type="inferred from homology"/>
<sequence>MKPSFNPNNRKRKKDHGFRKRMSTKNGRKILAARRQRGRKVLSA</sequence>
<comment type="similarity">
    <text evidence="1">Belongs to the bacterial ribosomal protein bL34 family.</text>
</comment>
<protein>
    <recommendedName>
        <fullName evidence="1">Large ribosomal subunit protein bL34</fullName>
    </recommendedName>
    <alternativeName>
        <fullName evidence="3">50S ribosomal protein L34</fullName>
    </alternativeName>
</protein>
<evidence type="ECO:0000255" key="1">
    <source>
        <dbReference type="HAMAP-Rule" id="MF_00391"/>
    </source>
</evidence>
<evidence type="ECO:0000256" key="2">
    <source>
        <dbReference type="SAM" id="MobiDB-lite"/>
    </source>
</evidence>
<evidence type="ECO:0000305" key="3"/>
<reference key="1">
    <citation type="submission" date="2005-03" db="EMBL/GenBank/DDBJ databases">
        <title>Brevibacillus brevis strain 47, complete genome.</title>
        <authorList>
            <person name="Hosoyama A."/>
            <person name="Yamada R."/>
            <person name="Hongo Y."/>
            <person name="Terui Y."/>
            <person name="Ankai A."/>
            <person name="Masuyama W."/>
            <person name="Sekiguchi M."/>
            <person name="Takeda T."/>
            <person name="Asano K."/>
            <person name="Ohji S."/>
            <person name="Ichikawa N."/>
            <person name="Narita S."/>
            <person name="Aoki N."/>
            <person name="Miura H."/>
            <person name="Matsushita S."/>
            <person name="Sekigawa T."/>
            <person name="Yamagata H."/>
            <person name="Yoshikawa H."/>
            <person name="Udaka S."/>
            <person name="Tanikawa S."/>
            <person name="Fujita N."/>
        </authorList>
    </citation>
    <scope>NUCLEOTIDE SEQUENCE [LARGE SCALE GENOMIC DNA]</scope>
    <source>
        <strain>47 / JCM 6285 / NBRC 100599</strain>
    </source>
</reference>
<gene>
    <name evidence="1" type="primary">rpmH</name>
    <name type="ordered locus">BBR47_59490</name>
</gene>
<name>RL34_BREBN</name>